<accession>Q8U008</accession>
<comment type="function">
    <text evidence="1">One of the primary rRNA binding proteins, it binds specifically to the 5'-end of 16S ribosomal RNA.</text>
</comment>
<comment type="subunit">
    <text evidence="1 2">Part of the 30S ribosomal subunit.</text>
</comment>
<comment type="similarity">
    <text evidence="1">Belongs to the universal ribosomal protein uS17 family.</text>
</comment>
<keyword id="KW-0002">3D-structure</keyword>
<keyword id="KW-1185">Reference proteome</keyword>
<keyword id="KW-0687">Ribonucleoprotein</keyword>
<keyword id="KW-0689">Ribosomal protein</keyword>
<keyword id="KW-0694">RNA-binding</keyword>
<keyword id="KW-0699">rRNA-binding</keyword>
<name>RS17_PYRFU</name>
<dbReference type="EMBL" id="AE009950">
    <property type="protein sequence ID" value="AAL81939.1"/>
    <property type="molecule type" value="Genomic_DNA"/>
</dbReference>
<dbReference type="RefSeq" id="WP_011012956.1">
    <property type="nucleotide sequence ID" value="NZ_CP023154.1"/>
</dbReference>
<dbReference type="PDB" id="4V4N">
    <property type="method" value="EM"/>
    <property type="resolution" value="9.00 A"/>
    <property type="chains" value="R=1-113"/>
</dbReference>
<dbReference type="PDB" id="4V6U">
    <property type="method" value="EM"/>
    <property type="resolution" value="6.60 A"/>
    <property type="chains" value="AR=1-113"/>
</dbReference>
<dbReference type="PDB" id="5JB3">
    <property type="method" value="EM"/>
    <property type="resolution" value="5.34 A"/>
    <property type="chains" value="R=1-113"/>
</dbReference>
<dbReference type="PDB" id="5JBH">
    <property type="method" value="EM"/>
    <property type="resolution" value="5.34 A"/>
    <property type="chains" value="R=1-113"/>
</dbReference>
<dbReference type="PDBsum" id="4V4N"/>
<dbReference type="PDBsum" id="4V6U"/>
<dbReference type="PDBsum" id="5JB3"/>
<dbReference type="PDBsum" id="5JBH"/>
<dbReference type="EMDB" id="EMD-50611"/>
<dbReference type="EMDB" id="EMD-50612"/>
<dbReference type="EMDB" id="EMD-50613"/>
<dbReference type="EMDB" id="EMD-8149"/>
<dbReference type="SMR" id="Q8U008"/>
<dbReference type="STRING" id="186497.PF1815"/>
<dbReference type="PaxDb" id="186497-PF1815"/>
<dbReference type="KEGG" id="pfu:PF1815"/>
<dbReference type="PATRIC" id="fig|186497.12.peg.1886"/>
<dbReference type="eggNOG" id="arCOG04096">
    <property type="taxonomic scope" value="Archaea"/>
</dbReference>
<dbReference type="HOGENOM" id="CLU_073626_0_3_2"/>
<dbReference type="OrthoDB" id="10698at2157"/>
<dbReference type="PhylomeDB" id="Q8U008"/>
<dbReference type="Proteomes" id="UP000001013">
    <property type="component" value="Chromosome"/>
</dbReference>
<dbReference type="GO" id="GO:0022627">
    <property type="term" value="C:cytosolic small ribosomal subunit"/>
    <property type="evidence" value="ECO:0007669"/>
    <property type="project" value="TreeGrafter"/>
</dbReference>
<dbReference type="GO" id="GO:0019843">
    <property type="term" value="F:rRNA binding"/>
    <property type="evidence" value="ECO:0007669"/>
    <property type="project" value="UniProtKB-UniRule"/>
</dbReference>
<dbReference type="GO" id="GO:0003735">
    <property type="term" value="F:structural constituent of ribosome"/>
    <property type="evidence" value="ECO:0007669"/>
    <property type="project" value="InterPro"/>
</dbReference>
<dbReference type="GO" id="GO:0006412">
    <property type="term" value="P:translation"/>
    <property type="evidence" value="ECO:0007669"/>
    <property type="project" value="UniProtKB-UniRule"/>
</dbReference>
<dbReference type="CDD" id="cd00364">
    <property type="entry name" value="Ribosomal_uS17"/>
    <property type="match status" value="1"/>
</dbReference>
<dbReference type="FunFam" id="2.40.50.1000:FF:000005">
    <property type="entry name" value="30S ribosomal protein S17"/>
    <property type="match status" value="1"/>
</dbReference>
<dbReference type="Gene3D" id="2.40.50.1000">
    <property type="match status" value="1"/>
</dbReference>
<dbReference type="HAMAP" id="MF_01345_A">
    <property type="entry name" value="Ribosomal_uS17_A"/>
    <property type="match status" value="1"/>
</dbReference>
<dbReference type="InterPro" id="IPR012340">
    <property type="entry name" value="NA-bd_OB-fold"/>
</dbReference>
<dbReference type="InterPro" id="IPR000266">
    <property type="entry name" value="Ribosomal_uS17"/>
</dbReference>
<dbReference type="InterPro" id="IPR028333">
    <property type="entry name" value="Ribosomal_uS17_arc/euk"/>
</dbReference>
<dbReference type="InterPro" id="IPR019978">
    <property type="entry name" value="Ribosomal_uS17_archaeal"/>
</dbReference>
<dbReference type="InterPro" id="IPR019979">
    <property type="entry name" value="Ribosomal_uS17_CS"/>
</dbReference>
<dbReference type="NCBIfam" id="NF006345">
    <property type="entry name" value="PRK08572.1"/>
    <property type="match status" value="1"/>
</dbReference>
<dbReference type="NCBIfam" id="TIGR03630">
    <property type="entry name" value="uS17_arch"/>
    <property type="match status" value="1"/>
</dbReference>
<dbReference type="PANTHER" id="PTHR10744">
    <property type="entry name" value="40S RIBOSOMAL PROTEIN S11 FAMILY MEMBER"/>
    <property type="match status" value="1"/>
</dbReference>
<dbReference type="PANTHER" id="PTHR10744:SF9">
    <property type="entry name" value="40S RIBOSOMAL PROTEIN S11-RELATED"/>
    <property type="match status" value="1"/>
</dbReference>
<dbReference type="Pfam" id="PF00366">
    <property type="entry name" value="Ribosomal_S17"/>
    <property type="match status" value="1"/>
</dbReference>
<dbReference type="PRINTS" id="PR00973">
    <property type="entry name" value="RIBOSOMALS17"/>
</dbReference>
<dbReference type="SUPFAM" id="SSF50249">
    <property type="entry name" value="Nucleic acid-binding proteins"/>
    <property type="match status" value="1"/>
</dbReference>
<dbReference type="PROSITE" id="PS00056">
    <property type="entry name" value="RIBOSOMAL_S17"/>
    <property type="match status" value="1"/>
</dbReference>
<reference key="1">
    <citation type="journal article" date="1999" name="Genetics">
        <title>Divergence of the hyperthermophilic archaea Pyrococcus furiosus and P. horikoshii inferred from complete genomic sequences.</title>
        <authorList>
            <person name="Maeder D.L."/>
            <person name="Weiss R.B."/>
            <person name="Dunn D.M."/>
            <person name="Cherry J.L."/>
            <person name="Gonzalez J.M."/>
            <person name="DiRuggiero J."/>
            <person name="Robb F.T."/>
        </authorList>
    </citation>
    <scope>NUCLEOTIDE SEQUENCE [LARGE SCALE GENOMIC DNA]</scope>
    <source>
        <strain>ATCC 43587 / DSM 3638 / JCM 8422 / Vc1</strain>
    </source>
</reference>
<reference evidence="3" key="2">
    <citation type="journal article" date="2013" name="Nucleic Acids Res.">
        <title>Promiscuous behaviour of archaeal ribosomal proteins: implications for eukaryotic ribosome evolution.</title>
        <authorList>
            <person name="Armache J.P."/>
            <person name="Anger A.M."/>
            <person name="Marquez V."/>
            <person name="Franckenberg S."/>
            <person name="Frohlich T."/>
            <person name="Villa E."/>
            <person name="Berninghausen O."/>
            <person name="Thomm M."/>
            <person name="Arnold G.J."/>
            <person name="Beckmann R."/>
            <person name="Wilson D.N."/>
        </authorList>
    </citation>
    <scope>STRUCTURE BY ELECTRON MICROSCOPY (6.60 ANGSTROMS) IN THE 70S RIBOSOME</scope>
    <scope>SUBUNIT</scope>
</reference>
<gene>
    <name evidence="1" type="primary">rps17</name>
    <name type="ordered locus">PF1815</name>
</gene>
<sequence length="113" mass="13268">MMRDIGLRVQPPAEKCDDPKCPWHGNLKIHGRVFEGIVVSDKPRKTVTVERQYYFYLNKYERYELRRSKIHAHNPPCINAKVGDKVLIAETRPLSKTKHFVVVAVLERAEERR</sequence>
<organism>
    <name type="scientific">Pyrococcus furiosus (strain ATCC 43587 / DSM 3638 / JCM 8422 / Vc1)</name>
    <dbReference type="NCBI Taxonomy" id="186497"/>
    <lineage>
        <taxon>Archaea</taxon>
        <taxon>Methanobacteriati</taxon>
        <taxon>Methanobacteriota</taxon>
        <taxon>Thermococci</taxon>
        <taxon>Thermococcales</taxon>
        <taxon>Thermococcaceae</taxon>
        <taxon>Pyrococcus</taxon>
    </lineage>
</organism>
<protein>
    <recommendedName>
        <fullName evidence="1">Small ribosomal subunit protein uS17</fullName>
    </recommendedName>
    <alternativeName>
        <fullName>30S ribosomal protein S17</fullName>
    </alternativeName>
</protein>
<evidence type="ECO:0000255" key="1">
    <source>
        <dbReference type="HAMAP-Rule" id="MF_01345"/>
    </source>
</evidence>
<evidence type="ECO:0000269" key="2">
    <source>
    </source>
</evidence>
<evidence type="ECO:0007744" key="3">
    <source>
        <dbReference type="PDB" id="4V6U"/>
    </source>
</evidence>
<proteinExistence type="evidence at protein level"/>
<feature type="chain" id="PRO_0000232615" description="Small ribosomal subunit protein uS17">
    <location>
        <begin position="1"/>
        <end position="113"/>
    </location>
</feature>